<organism>
    <name type="scientific">Caenorhabditis briggsae</name>
    <dbReference type="NCBI Taxonomy" id="6238"/>
    <lineage>
        <taxon>Eukaryota</taxon>
        <taxon>Metazoa</taxon>
        <taxon>Ecdysozoa</taxon>
        <taxon>Nematoda</taxon>
        <taxon>Chromadorea</taxon>
        <taxon>Rhabditida</taxon>
        <taxon>Rhabditina</taxon>
        <taxon>Rhabditomorpha</taxon>
        <taxon>Rhabditoidea</taxon>
        <taxon>Rhabditidae</taxon>
        <taxon>Peloderinae</taxon>
        <taxon>Caenorhabditis</taxon>
    </lineage>
</organism>
<accession>P32810</accession>
<accession>A8XJE0</accession>
<proteinExistence type="inferred from homology"/>
<gene>
    <name evidence="4" type="ORF">CBG14136</name>
</gene>
<reference key="1">
    <citation type="journal article" date="1992" name="Gene">
        <title>Conservation of gene organization and trans-splicing in the glyceraldehyde-3-phosphate dehydrogenase-encoding genes of Caenorhabditis briggsae.</title>
        <authorList>
            <person name="Lee Y.H."/>
            <person name="Huang X.Y."/>
            <person name="Hirsh D."/>
            <person name="Fox G.E."/>
            <person name="Hecht R.M."/>
        </authorList>
    </citation>
    <scope>NUCLEOTIDE SEQUENCE [GENOMIC DNA]</scope>
</reference>
<reference key="2">
    <citation type="journal article" date="2003" name="PLoS Biol.">
        <title>The genome sequence of Caenorhabditis briggsae: a platform for comparative genomics.</title>
        <authorList>
            <person name="Stein L.D."/>
            <person name="Bao Z."/>
            <person name="Blasiar D."/>
            <person name="Blumenthal T."/>
            <person name="Brent M.R."/>
            <person name="Chen N."/>
            <person name="Chinwalla A."/>
            <person name="Clarke L."/>
            <person name="Clee C."/>
            <person name="Coghlan A."/>
            <person name="Coulson A."/>
            <person name="D'Eustachio P."/>
            <person name="Fitch D.H.A."/>
            <person name="Fulton L.A."/>
            <person name="Fulton R.E."/>
            <person name="Griffiths-Jones S."/>
            <person name="Harris T.W."/>
            <person name="Hillier L.W."/>
            <person name="Kamath R."/>
            <person name="Kuwabara P.E."/>
            <person name="Mardis E.R."/>
            <person name="Marra M.A."/>
            <person name="Miner T.L."/>
            <person name="Minx P."/>
            <person name="Mullikin J.C."/>
            <person name="Plumb R.W."/>
            <person name="Rogers J."/>
            <person name="Schein J.E."/>
            <person name="Sohrmann M."/>
            <person name="Spieth J."/>
            <person name="Stajich J.E."/>
            <person name="Wei C."/>
            <person name="Willey D."/>
            <person name="Wilson R.K."/>
            <person name="Durbin R.M."/>
            <person name="Waterston R.H."/>
        </authorList>
    </citation>
    <scope>NUCLEOTIDE SEQUENCE [LARGE SCALE GENOMIC DNA]</scope>
    <source>
        <strain>AF16</strain>
    </source>
</reference>
<keyword id="KW-0963">Cytoplasm</keyword>
<keyword id="KW-0324">Glycolysis</keyword>
<keyword id="KW-0520">NAD</keyword>
<keyword id="KW-0560">Oxidoreductase</keyword>
<keyword id="KW-1185">Reference proteome</keyword>
<name>G3P3_CAEBR</name>
<evidence type="ECO:0000250" key="1"/>
<evidence type="ECO:0000255" key="2">
    <source>
        <dbReference type="PROSITE-ProRule" id="PRU10009"/>
    </source>
</evidence>
<evidence type="ECO:0000305" key="3"/>
<evidence type="ECO:0000312" key="4">
    <source>
        <dbReference type="WormBase" id="CBG14136"/>
    </source>
</evidence>
<protein>
    <recommendedName>
        <fullName>Glyceraldehyde-3-phosphate dehydrogenase 3.1</fullName>
        <shortName>GAPDH-3</shortName>
        <ecNumber>1.2.1.12</ecNumber>
    </recommendedName>
</protein>
<dbReference type="EC" id="1.2.1.12"/>
<dbReference type="EMBL" id="M86669">
    <property type="status" value="NOT_ANNOTATED_CDS"/>
    <property type="molecule type" value="Genomic_DNA"/>
</dbReference>
<dbReference type="EMBL" id="HE600983">
    <property type="protein sequence ID" value="CAP32765.1"/>
    <property type="molecule type" value="Genomic_DNA"/>
</dbReference>
<dbReference type="PIR" id="JH0770">
    <property type="entry name" value="JH0770"/>
</dbReference>
<dbReference type="SMR" id="P32810"/>
<dbReference type="FunCoup" id="P32810">
    <property type="interactions" value="625"/>
</dbReference>
<dbReference type="STRING" id="6238.P32810"/>
<dbReference type="EnsemblMetazoa" id="CBG14136.1">
    <property type="protein sequence ID" value="CBG14136.1"/>
    <property type="gene ID" value="WBGene00000333"/>
</dbReference>
<dbReference type="KEGG" id="cbr:CBG_14136"/>
<dbReference type="CTD" id="8586322"/>
<dbReference type="WormBase" id="CBG14136">
    <property type="protein sequence ID" value="CBP09851"/>
    <property type="gene ID" value="WBGene00000333"/>
</dbReference>
<dbReference type="eggNOG" id="KOG0657">
    <property type="taxonomic scope" value="Eukaryota"/>
</dbReference>
<dbReference type="HOGENOM" id="CLU_030140_0_3_1"/>
<dbReference type="InParanoid" id="P32810"/>
<dbReference type="OMA" id="FMAHMAC"/>
<dbReference type="UniPathway" id="UPA00109">
    <property type="reaction ID" value="UER00184"/>
</dbReference>
<dbReference type="Proteomes" id="UP000008549">
    <property type="component" value="Unassembled WGS sequence"/>
</dbReference>
<dbReference type="GO" id="GO:0005829">
    <property type="term" value="C:cytosol"/>
    <property type="evidence" value="ECO:0000318"/>
    <property type="project" value="GO_Central"/>
</dbReference>
<dbReference type="GO" id="GO:0004365">
    <property type="term" value="F:glyceraldehyde-3-phosphate dehydrogenase (NAD+) (phosphorylating) activity"/>
    <property type="evidence" value="ECO:0000318"/>
    <property type="project" value="GO_Central"/>
</dbReference>
<dbReference type="GO" id="GO:0051287">
    <property type="term" value="F:NAD binding"/>
    <property type="evidence" value="ECO:0007669"/>
    <property type="project" value="InterPro"/>
</dbReference>
<dbReference type="GO" id="GO:0050661">
    <property type="term" value="F:NADP binding"/>
    <property type="evidence" value="ECO:0007669"/>
    <property type="project" value="InterPro"/>
</dbReference>
<dbReference type="GO" id="GO:0006006">
    <property type="term" value="P:glucose metabolic process"/>
    <property type="evidence" value="ECO:0007669"/>
    <property type="project" value="InterPro"/>
</dbReference>
<dbReference type="GO" id="GO:0006096">
    <property type="term" value="P:glycolytic process"/>
    <property type="evidence" value="ECO:0000318"/>
    <property type="project" value="GO_Central"/>
</dbReference>
<dbReference type="CDD" id="cd18126">
    <property type="entry name" value="GAPDH_I_C"/>
    <property type="match status" value="1"/>
</dbReference>
<dbReference type="CDD" id="cd05214">
    <property type="entry name" value="GAPDH_I_N"/>
    <property type="match status" value="1"/>
</dbReference>
<dbReference type="FunFam" id="3.30.360.10:FF:000001">
    <property type="entry name" value="Glyceraldehyde-3-phosphate dehydrogenase"/>
    <property type="match status" value="1"/>
</dbReference>
<dbReference type="FunFam" id="3.40.50.720:FF:000266">
    <property type="entry name" value="Glyceraldehyde-3-phosphate dehydrogenase"/>
    <property type="match status" value="1"/>
</dbReference>
<dbReference type="Gene3D" id="3.30.360.10">
    <property type="entry name" value="Dihydrodipicolinate Reductase, domain 2"/>
    <property type="match status" value="1"/>
</dbReference>
<dbReference type="Gene3D" id="3.40.50.720">
    <property type="entry name" value="NAD(P)-binding Rossmann-like Domain"/>
    <property type="match status" value="1"/>
</dbReference>
<dbReference type="InterPro" id="IPR020831">
    <property type="entry name" value="GlycerAld/Erythrose_P_DH"/>
</dbReference>
<dbReference type="InterPro" id="IPR020830">
    <property type="entry name" value="GlycerAld_3-P_DH_AS"/>
</dbReference>
<dbReference type="InterPro" id="IPR020829">
    <property type="entry name" value="GlycerAld_3-P_DH_cat"/>
</dbReference>
<dbReference type="InterPro" id="IPR020828">
    <property type="entry name" value="GlycerAld_3-P_DH_NAD(P)-bd"/>
</dbReference>
<dbReference type="InterPro" id="IPR006424">
    <property type="entry name" value="Glyceraldehyde-3-P_DH_1"/>
</dbReference>
<dbReference type="InterPro" id="IPR036291">
    <property type="entry name" value="NAD(P)-bd_dom_sf"/>
</dbReference>
<dbReference type="NCBIfam" id="TIGR01534">
    <property type="entry name" value="GAPDH-I"/>
    <property type="match status" value="1"/>
</dbReference>
<dbReference type="PANTHER" id="PTHR10836">
    <property type="entry name" value="GLYCERALDEHYDE 3-PHOSPHATE DEHYDROGENASE"/>
    <property type="match status" value="1"/>
</dbReference>
<dbReference type="PANTHER" id="PTHR10836:SF76">
    <property type="entry name" value="GLYCERALDEHYDE-3-PHOSPHATE DEHYDROGENASE-RELATED"/>
    <property type="match status" value="1"/>
</dbReference>
<dbReference type="Pfam" id="PF02800">
    <property type="entry name" value="Gp_dh_C"/>
    <property type="match status" value="1"/>
</dbReference>
<dbReference type="Pfam" id="PF00044">
    <property type="entry name" value="Gp_dh_N"/>
    <property type="match status" value="1"/>
</dbReference>
<dbReference type="PIRSF" id="PIRSF000149">
    <property type="entry name" value="GAP_DH"/>
    <property type="match status" value="1"/>
</dbReference>
<dbReference type="PRINTS" id="PR00078">
    <property type="entry name" value="G3PDHDRGNASE"/>
</dbReference>
<dbReference type="SMART" id="SM00846">
    <property type="entry name" value="Gp_dh_N"/>
    <property type="match status" value="1"/>
</dbReference>
<dbReference type="SUPFAM" id="SSF55347">
    <property type="entry name" value="Glyceraldehyde-3-phosphate dehydrogenase-like, C-terminal domain"/>
    <property type="match status" value="1"/>
</dbReference>
<dbReference type="SUPFAM" id="SSF51735">
    <property type="entry name" value="NAD(P)-binding Rossmann-fold domains"/>
    <property type="match status" value="1"/>
</dbReference>
<dbReference type="PROSITE" id="PS00071">
    <property type="entry name" value="GAPDH"/>
    <property type="match status" value="1"/>
</dbReference>
<comment type="catalytic activity">
    <reaction evidence="2">
        <text>D-glyceraldehyde 3-phosphate + phosphate + NAD(+) = (2R)-3-phospho-glyceroyl phosphate + NADH + H(+)</text>
        <dbReference type="Rhea" id="RHEA:10300"/>
        <dbReference type="ChEBI" id="CHEBI:15378"/>
        <dbReference type="ChEBI" id="CHEBI:43474"/>
        <dbReference type="ChEBI" id="CHEBI:57540"/>
        <dbReference type="ChEBI" id="CHEBI:57604"/>
        <dbReference type="ChEBI" id="CHEBI:57945"/>
        <dbReference type="ChEBI" id="CHEBI:59776"/>
        <dbReference type="EC" id="1.2.1.12"/>
    </reaction>
</comment>
<comment type="pathway">
    <text>Carbohydrate degradation; glycolysis; pyruvate from D-glyceraldehyde 3-phosphate: step 1/5.</text>
</comment>
<comment type="subunit">
    <text>Homotetramer.</text>
</comment>
<comment type="subcellular location">
    <subcellularLocation>
        <location>Cytoplasm</location>
    </subcellularLocation>
</comment>
<comment type="similarity">
    <text evidence="3">Belongs to the glyceraldehyde-3-phosphate dehydrogenase family.</text>
</comment>
<sequence>MSKPSVGINGFGRIGRLVLRAAVEKDSVNVVAVNDPFISIDYMVYLFQYDSTHGRFKGTVAHEGDYLLVAKEGKSQHKIKVYNSRDPAEIQWGSAGADYVVESTGVFTTIEKANAHLKGGAKKVIISAPSADAPMFVVGVNHEKYDHANDHIISNASCTTNCLAPLAKVINDNFGIIEGLMTTVHAVTATQKTVDGPSGKLWRDGRGAGQNIIPASTGAAKAVGKVIPELNGKLTGMAFRVPTPDVSVVDLTARLEKPASLDDIKKVVKAAAEGPLKGVLAYTEDQVVSTDFVSDTHSSIFDAGASIILNPNFVKLISWYDNEFGYSNRVVDLISYIATKA</sequence>
<feature type="chain" id="PRO_0000145509" description="Glyceraldehyde-3-phosphate dehydrogenase 3.1">
    <location>
        <begin position="1"/>
        <end position="341"/>
    </location>
</feature>
<feature type="active site" description="Nucleophile" evidence="2">
    <location>
        <position position="158"/>
    </location>
</feature>
<feature type="binding site" evidence="1">
    <location>
        <begin position="13"/>
        <end position="14"/>
    </location>
    <ligand>
        <name>NAD(+)</name>
        <dbReference type="ChEBI" id="CHEBI:57540"/>
    </ligand>
</feature>
<feature type="binding site" evidence="1">
    <location>
        <position position="35"/>
    </location>
    <ligand>
        <name>NAD(+)</name>
        <dbReference type="ChEBI" id="CHEBI:57540"/>
    </ligand>
</feature>
<feature type="binding site" evidence="1">
    <location>
        <position position="85"/>
    </location>
    <ligand>
        <name>NAD(+)</name>
        <dbReference type="ChEBI" id="CHEBI:57540"/>
    </ligand>
</feature>
<feature type="binding site" evidence="1">
    <location>
        <begin position="157"/>
        <end position="159"/>
    </location>
    <ligand>
        <name>D-glyceraldehyde 3-phosphate</name>
        <dbReference type="ChEBI" id="CHEBI:59776"/>
    </ligand>
</feature>
<feature type="binding site" evidence="1">
    <location>
        <position position="188"/>
    </location>
    <ligand>
        <name>D-glyceraldehyde 3-phosphate</name>
        <dbReference type="ChEBI" id="CHEBI:59776"/>
    </ligand>
</feature>
<feature type="binding site" evidence="1">
    <location>
        <begin position="217"/>
        <end position="218"/>
    </location>
    <ligand>
        <name>D-glyceraldehyde 3-phosphate</name>
        <dbReference type="ChEBI" id="CHEBI:59776"/>
    </ligand>
</feature>
<feature type="binding site" evidence="1">
    <location>
        <position position="240"/>
    </location>
    <ligand>
        <name>D-glyceraldehyde 3-phosphate</name>
        <dbReference type="ChEBI" id="CHEBI:59776"/>
    </ligand>
</feature>
<feature type="binding site" evidence="1">
    <location>
        <position position="322"/>
    </location>
    <ligand>
        <name>NAD(+)</name>
        <dbReference type="ChEBI" id="CHEBI:57540"/>
    </ligand>
</feature>
<feature type="site" description="Activates thiol group during catalysis" evidence="1">
    <location>
        <position position="185"/>
    </location>
</feature>